<proteinExistence type="inferred from homology"/>
<reference key="1">
    <citation type="submission" date="2007-02" db="EMBL/GenBank/DDBJ databases">
        <title>Complete sequence of Pyrobaculum calidifontis JCM 11548.</title>
        <authorList>
            <consortium name="US DOE Joint Genome Institute"/>
            <person name="Copeland A."/>
            <person name="Lucas S."/>
            <person name="Lapidus A."/>
            <person name="Barry K."/>
            <person name="Glavina del Rio T."/>
            <person name="Dalin E."/>
            <person name="Tice H."/>
            <person name="Pitluck S."/>
            <person name="Chain P."/>
            <person name="Malfatti S."/>
            <person name="Shin M."/>
            <person name="Vergez L."/>
            <person name="Schmutz J."/>
            <person name="Larimer F."/>
            <person name="Land M."/>
            <person name="Hauser L."/>
            <person name="Kyrpides N."/>
            <person name="Mikhailova N."/>
            <person name="Cozen A.E."/>
            <person name="Fitz-Gibbon S.T."/>
            <person name="House C.H."/>
            <person name="Saltikov C."/>
            <person name="Lowe T.M."/>
            <person name="Richardson P."/>
        </authorList>
    </citation>
    <scope>NUCLEOTIDE SEQUENCE [LARGE SCALE GENOMIC DNA]</scope>
    <source>
        <strain>DSM 21063 / JCM 11548 / VA1</strain>
    </source>
</reference>
<name>SRP54_PYRCJ</name>
<dbReference type="EC" id="3.6.5.4" evidence="1"/>
<dbReference type="EMBL" id="CP000561">
    <property type="protein sequence ID" value="ABO09143.1"/>
    <property type="molecule type" value="Genomic_DNA"/>
</dbReference>
<dbReference type="RefSeq" id="WP_011850402.1">
    <property type="nucleotide sequence ID" value="NC_009073.1"/>
</dbReference>
<dbReference type="SMR" id="A3MWX6"/>
<dbReference type="STRING" id="410359.Pcal_1726"/>
<dbReference type="GeneID" id="4909760"/>
<dbReference type="KEGG" id="pcl:Pcal_1726"/>
<dbReference type="eggNOG" id="arCOG01228">
    <property type="taxonomic scope" value="Archaea"/>
</dbReference>
<dbReference type="HOGENOM" id="CLU_009301_6_0_2"/>
<dbReference type="OrthoDB" id="52849at2157"/>
<dbReference type="Proteomes" id="UP000001431">
    <property type="component" value="Chromosome"/>
</dbReference>
<dbReference type="GO" id="GO:0048500">
    <property type="term" value="C:signal recognition particle"/>
    <property type="evidence" value="ECO:0007669"/>
    <property type="project" value="UniProtKB-UniRule"/>
</dbReference>
<dbReference type="GO" id="GO:0008312">
    <property type="term" value="F:7S RNA binding"/>
    <property type="evidence" value="ECO:0007669"/>
    <property type="project" value="UniProtKB-UniRule"/>
</dbReference>
<dbReference type="GO" id="GO:0016887">
    <property type="term" value="F:ATP hydrolysis activity"/>
    <property type="evidence" value="ECO:0007669"/>
    <property type="project" value="InterPro"/>
</dbReference>
<dbReference type="GO" id="GO:0005525">
    <property type="term" value="F:GTP binding"/>
    <property type="evidence" value="ECO:0007669"/>
    <property type="project" value="UniProtKB-UniRule"/>
</dbReference>
<dbReference type="GO" id="GO:0003924">
    <property type="term" value="F:GTPase activity"/>
    <property type="evidence" value="ECO:0007669"/>
    <property type="project" value="UniProtKB-UniRule"/>
</dbReference>
<dbReference type="GO" id="GO:0006614">
    <property type="term" value="P:SRP-dependent cotranslational protein targeting to membrane"/>
    <property type="evidence" value="ECO:0007669"/>
    <property type="project" value="InterPro"/>
</dbReference>
<dbReference type="CDD" id="cd17875">
    <property type="entry name" value="SRP54_G"/>
    <property type="match status" value="1"/>
</dbReference>
<dbReference type="FunFam" id="3.40.50.300:FF:000022">
    <property type="entry name" value="Signal recognition particle 54 kDa subunit"/>
    <property type="match status" value="1"/>
</dbReference>
<dbReference type="Gene3D" id="3.40.50.300">
    <property type="entry name" value="P-loop containing nucleotide triphosphate hydrolases"/>
    <property type="match status" value="1"/>
</dbReference>
<dbReference type="Gene3D" id="1.20.120.140">
    <property type="entry name" value="Signal recognition particle SRP54, nucleotide-binding domain"/>
    <property type="match status" value="1"/>
</dbReference>
<dbReference type="Gene3D" id="1.10.260.30">
    <property type="entry name" value="Signal recognition particle, SRP54 subunit, M-domain"/>
    <property type="match status" value="1"/>
</dbReference>
<dbReference type="HAMAP" id="MF_00306">
    <property type="entry name" value="SRP54"/>
    <property type="match status" value="1"/>
</dbReference>
<dbReference type="InterPro" id="IPR003593">
    <property type="entry name" value="AAA+_ATPase"/>
</dbReference>
<dbReference type="InterPro" id="IPR027417">
    <property type="entry name" value="P-loop_NTPase"/>
</dbReference>
<dbReference type="InterPro" id="IPR036891">
    <property type="entry name" value="Signal_recog_part_SRP54_M_sf"/>
</dbReference>
<dbReference type="InterPro" id="IPR013822">
    <property type="entry name" value="Signal_recog_particl_SRP54_hlx"/>
</dbReference>
<dbReference type="InterPro" id="IPR004125">
    <property type="entry name" value="Signal_recog_particle_SRP54_M"/>
</dbReference>
<dbReference type="InterPro" id="IPR036225">
    <property type="entry name" value="SRP/SRP_N"/>
</dbReference>
<dbReference type="InterPro" id="IPR022941">
    <property type="entry name" value="SRP54"/>
</dbReference>
<dbReference type="InterPro" id="IPR000897">
    <property type="entry name" value="SRP54_GTPase_dom"/>
</dbReference>
<dbReference type="InterPro" id="IPR042101">
    <property type="entry name" value="SRP54_N_sf"/>
</dbReference>
<dbReference type="PANTHER" id="PTHR11564">
    <property type="entry name" value="SIGNAL RECOGNITION PARTICLE 54K PROTEIN SRP54"/>
    <property type="match status" value="1"/>
</dbReference>
<dbReference type="PANTHER" id="PTHR11564:SF5">
    <property type="entry name" value="SIGNAL RECOGNITION PARTICLE SUBUNIT SRP54"/>
    <property type="match status" value="1"/>
</dbReference>
<dbReference type="Pfam" id="PF00448">
    <property type="entry name" value="SRP54"/>
    <property type="match status" value="1"/>
</dbReference>
<dbReference type="Pfam" id="PF02881">
    <property type="entry name" value="SRP54_N"/>
    <property type="match status" value="1"/>
</dbReference>
<dbReference type="Pfam" id="PF02978">
    <property type="entry name" value="SRP_SPB"/>
    <property type="match status" value="1"/>
</dbReference>
<dbReference type="SMART" id="SM00382">
    <property type="entry name" value="AAA"/>
    <property type="match status" value="1"/>
</dbReference>
<dbReference type="SMART" id="SM00962">
    <property type="entry name" value="SRP54"/>
    <property type="match status" value="1"/>
</dbReference>
<dbReference type="SMART" id="SM00963">
    <property type="entry name" value="SRP54_N"/>
    <property type="match status" value="1"/>
</dbReference>
<dbReference type="SUPFAM" id="SSF47364">
    <property type="entry name" value="Domain of the SRP/SRP receptor G-proteins"/>
    <property type="match status" value="1"/>
</dbReference>
<dbReference type="SUPFAM" id="SSF52540">
    <property type="entry name" value="P-loop containing nucleoside triphosphate hydrolases"/>
    <property type="match status" value="1"/>
</dbReference>
<dbReference type="SUPFAM" id="SSF47446">
    <property type="entry name" value="Signal peptide-binding domain"/>
    <property type="match status" value="1"/>
</dbReference>
<sequence>MKLSEVFSKLIEKIRGVDYIDEAVLQELSREIQRSLLKADVPLELVKAFTDSAVKRIREEKPPAGIPPREYLVYVLYEELVKLLGGEQPAEFKPTKKPYVVLLLGVEGSGKTTTAAKLAKYLAKRGYKVGLVETDTIRPAAFDQLKQLAEKIGVPFYGERDGKNAVEIAVRGVQNFKNMDVVIIDTAGRHRNEEELLKEVKAIYDAVKPDEVFLVIDATVGKLAAAQAEAFMKYLPIHSVIITKMDSTARGGGALAAVAKTGARVKFIGVGEDVDEFELFNPRKFVARVLGMGDLDALVEKIKAVFEEDKVLEELESGRLDLLTFKKQIDSLLKLGPLSKVFQLLPSNFAIKVSEEQIELSQKNLRKWKAILSSMTMEELKHPEVLNASRIRRIAMGAGVTPKDVKEMLTVFENMKKMSKMLKRQMRMKMR</sequence>
<protein>
    <recommendedName>
        <fullName evidence="1">Signal recognition particle 54 kDa protein</fullName>
        <shortName evidence="1">SRP54</shortName>
        <ecNumber evidence="1">3.6.5.4</ecNumber>
    </recommendedName>
</protein>
<organism>
    <name type="scientific">Pyrobaculum calidifontis (strain DSM 21063 / JCM 11548 / VA1)</name>
    <dbReference type="NCBI Taxonomy" id="410359"/>
    <lineage>
        <taxon>Archaea</taxon>
        <taxon>Thermoproteota</taxon>
        <taxon>Thermoprotei</taxon>
        <taxon>Thermoproteales</taxon>
        <taxon>Thermoproteaceae</taxon>
        <taxon>Pyrobaculum</taxon>
    </lineage>
</organism>
<comment type="function">
    <text evidence="1">Involved in targeting and insertion of nascent membrane proteins into the cytoplasmic membrane. Binds to the hydrophobic signal sequence of the ribosome-nascent chain (RNC) as it emerges from the ribosomes. The SRP-RNC complex is then targeted to the cytoplasmic membrane where it interacts with the SRP receptor FtsY.</text>
</comment>
<comment type="catalytic activity">
    <reaction evidence="1">
        <text>GTP + H2O = GDP + phosphate + H(+)</text>
        <dbReference type="Rhea" id="RHEA:19669"/>
        <dbReference type="ChEBI" id="CHEBI:15377"/>
        <dbReference type="ChEBI" id="CHEBI:15378"/>
        <dbReference type="ChEBI" id="CHEBI:37565"/>
        <dbReference type="ChEBI" id="CHEBI:43474"/>
        <dbReference type="ChEBI" id="CHEBI:58189"/>
        <dbReference type="EC" id="3.6.5.4"/>
    </reaction>
</comment>
<comment type="subunit">
    <text evidence="1">Part of the signal recognition particle protein translocation system, which is composed of SRP and FtsY. Archaeal SRP consists of a 7S RNA molecule of 300 nucleotides and two protein subunits: SRP54 and SRP19.</text>
</comment>
<comment type="subcellular location">
    <subcellularLocation>
        <location evidence="1">Cytoplasm</location>
    </subcellularLocation>
    <text evidence="1">The SRP-RNC complex is targeted to the cytoplasmic membrane.</text>
</comment>
<comment type="domain">
    <text evidence="1">Composed of three domains: the N-terminal N domain, which is responsible for interactions with the ribosome, the central G domain, which binds GTP, and the C-terminal M domain, which binds the RNA and the signal sequence of the RNC.</text>
</comment>
<comment type="similarity">
    <text evidence="1">Belongs to the GTP-binding SRP family. SRP54 subfamily.</text>
</comment>
<feature type="chain" id="PRO_0000322246" description="Signal recognition particle 54 kDa protein">
    <location>
        <begin position="1"/>
        <end position="431"/>
    </location>
</feature>
<feature type="binding site" evidence="1">
    <location>
        <begin position="105"/>
        <end position="112"/>
    </location>
    <ligand>
        <name>GTP</name>
        <dbReference type="ChEBI" id="CHEBI:37565"/>
    </ligand>
</feature>
<feature type="binding site" evidence="1">
    <location>
        <begin position="185"/>
        <end position="189"/>
    </location>
    <ligand>
        <name>GTP</name>
        <dbReference type="ChEBI" id="CHEBI:37565"/>
    </ligand>
</feature>
<feature type="binding site" evidence="1">
    <location>
        <begin position="243"/>
        <end position="246"/>
    </location>
    <ligand>
        <name>GTP</name>
        <dbReference type="ChEBI" id="CHEBI:37565"/>
    </ligand>
</feature>
<accession>A3MWX6</accession>
<evidence type="ECO:0000255" key="1">
    <source>
        <dbReference type="HAMAP-Rule" id="MF_00306"/>
    </source>
</evidence>
<gene>
    <name evidence="1" type="primary">srp54</name>
    <name type="ordered locus">Pcal_1726</name>
</gene>
<keyword id="KW-0963">Cytoplasm</keyword>
<keyword id="KW-0342">GTP-binding</keyword>
<keyword id="KW-0378">Hydrolase</keyword>
<keyword id="KW-0547">Nucleotide-binding</keyword>
<keyword id="KW-0687">Ribonucleoprotein</keyword>
<keyword id="KW-0694">RNA-binding</keyword>
<keyword id="KW-0733">Signal recognition particle</keyword>